<proteinExistence type="inferred from homology"/>
<organism>
    <name type="scientific">Salmonella heidelberg (strain SL476)</name>
    <dbReference type="NCBI Taxonomy" id="454169"/>
    <lineage>
        <taxon>Bacteria</taxon>
        <taxon>Pseudomonadati</taxon>
        <taxon>Pseudomonadota</taxon>
        <taxon>Gammaproteobacteria</taxon>
        <taxon>Enterobacterales</taxon>
        <taxon>Enterobacteriaceae</taxon>
        <taxon>Salmonella</taxon>
    </lineage>
</organism>
<reference key="1">
    <citation type="journal article" date="2011" name="J. Bacteriol.">
        <title>Comparative genomics of 28 Salmonella enterica isolates: evidence for CRISPR-mediated adaptive sublineage evolution.</title>
        <authorList>
            <person name="Fricke W.F."/>
            <person name="Mammel M.K."/>
            <person name="McDermott P.F."/>
            <person name="Tartera C."/>
            <person name="White D.G."/>
            <person name="Leclerc J.E."/>
            <person name="Ravel J."/>
            <person name="Cebula T.A."/>
        </authorList>
    </citation>
    <scope>NUCLEOTIDE SEQUENCE [LARGE SCALE GENOMIC DNA]</scope>
    <source>
        <strain>SL476</strain>
    </source>
</reference>
<keyword id="KW-0004">4Fe-4S</keyword>
<keyword id="KW-0963">Cytoplasm</keyword>
<keyword id="KW-0408">Iron</keyword>
<keyword id="KW-0411">Iron-sulfur</keyword>
<keyword id="KW-0479">Metal-binding</keyword>
<keyword id="KW-0949">S-adenosyl-L-methionine</keyword>
<keyword id="KW-0808">Transferase</keyword>
<comment type="function">
    <text evidence="1">Catalyzes the methylthiolation of an aspartic acid residue of ribosomal protein uS12.</text>
</comment>
<comment type="catalytic activity">
    <reaction evidence="1">
        <text>L-aspartate(89)-[ribosomal protein uS12]-hydrogen + (sulfur carrier)-SH + AH2 + 2 S-adenosyl-L-methionine = 3-methylsulfanyl-L-aspartate(89)-[ribosomal protein uS12]-hydrogen + (sulfur carrier)-H + 5'-deoxyadenosine + L-methionine + A + S-adenosyl-L-homocysteine + 2 H(+)</text>
        <dbReference type="Rhea" id="RHEA:37087"/>
        <dbReference type="Rhea" id="RHEA-COMP:10460"/>
        <dbReference type="Rhea" id="RHEA-COMP:10461"/>
        <dbReference type="Rhea" id="RHEA-COMP:14737"/>
        <dbReference type="Rhea" id="RHEA-COMP:14739"/>
        <dbReference type="ChEBI" id="CHEBI:13193"/>
        <dbReference type="ChEBI" id="CHEBI:15378"/>
        <dbReference type="ChEBI" id="CHEBI:17319"/>
        <dbReference type="ChEBI" id="CHEBI:17499"/>
        <dbReference type="ChEBI" id="CHEBI:29917"/>
        <dbReference type="ChEBI" id="CHEBI:29961"/>
        <dbReference type="ChEBI" id="CHEBI:57844"/>
        <dbReference type="ChEBI" id="CHEBI:57856"/>
        <dbReference type="ChEBI" id="CHEBI:59789"/>
        <dbReference type="ChEBI" id="CHEBI:64428"/>
        <dbReference type="ChEBI" id="CHEBI:73599"/>
        <dbReference type="EC" id="2.8.4.4"/>
    </reaction>
</comment>
<comment type="cofactor">
    <cofactor evidence="1">
        <name>[4Fe-4S] cluster</name>
        <dbReference type="ChEBI" id="CHEBI:49883"/>
    </cofactor>
    <text evidence="1">Binds 2 [4Fe-4S] clusters. One cluster is coordinated with 3 cysteines and an exchangeable S-adenosyl-L-methionine.</text>
</comment>
<comment type="subcellular location">
    <subcellularLocation>
        <location evidence="1">Cytoplasm</location>
    </subcellularLocation>
</comment>
<comment type="similarity">
    <text evidence="1">Belongs to the methylthiotransferase family. RimO subfamily.</text>
</comment>
<sequence length="441" mass="49539">MSNVTHQPKIGFVSLGCPKNLVDSERILTELRTEGYDVVPRYDDADMVIVNTCGFIDSAVQESLEAIGEALNENGKVIVTGCLGAKEDQIREVHPKVLEITGPHSYEQVLQHVHHYVPKPKHNPFLSLVPEQGVKLTPRHYAYLKISEGCNHRCTFCIIPSMRGDLVSRPIGDVLSEAKRLVDAGVKEILVISQDTSAYGVDVKHRTGFHNGEPVKTSMVSLCEQLSKLGVWTRLHYVYPYPHVDDVIPLMAEGKILPYLDIPLQHASPRILKLMKRPGSVDRQLARIKQWREICPELTLRSTFIVGFPGETEEDFQMLLDFLKEARLDRVGCFKYSPVEGAGANDLPAQVPEEVKEERWNRFMQLQQQISAERLQEKVGREILVIVDEVDEEGAIGRSMADAPEIDGAVYLNGETNVKPGDIVRVKVENADEYDLWGSRV</sequence>
<evidence type="ECO:0000255" key="1">
    <source>
        <dbReference type="HAMAP-Rule" id="MF_01865"/>
    </source>
</evidence>
<evidence type="ECO:0000255" key="2">
    <source>
        <dbReference type="PROSITE-ProRule" id="PRU01266"/>
    </source>
</evidence>
<feature type="chain" id="PRO_0000374991" description="Ribosomal protein uS12 methylthiotransferase RimO">
    <location>
        <begin position="1"/>
        <end position="441"/>
    </location>
</feature>
<feature type="domain" description="MTTase N-terminal" evidence="1">
    <location>
        <begin position="8"/>
        <end position="118"/>
    </location>
</feature>
<feature type="domain" description="Radical SAM core" evidence="2">
    <location>
        <begin position="136"/>
        <end position="373"/>
    </location>
</feature>
<feature type="domain" description="TRAM" evidence="1">
    <location>
        <begin position="376"/>
        <end position="441"/>
    </location>
</feature>
<feature type="binding site" evidence="1">
    <location>
        <position position="17"/>
    </location>
    <ligand>
        <name>[4Fe-4S] cluster</name>
        <dbReference type="ChEBI" id="CHEBI:49883"/>
        <label>1</label>
    </ligand>
</feature>
<feature type="binding site" evidence="1">
    <location>
        <position position="53"/>
    </location>
    <ligand>
        <name>[4Fe-4S] cluster</name>
        <dbReference type="ChEBI" id="CHEBI:49883"/>
        <label>1</label>
    </ligand>
</feature>
<feature type="binding site" evidence="1">
    <location>
        <position position="82"/>
    </location>
    <ligand>
        <name>[4Fe-4S] cluster</name>
        <dbReference type="ChEBI" id="CHEBI:49883"/>
        <label>1</label>
    </ligand>
</feature>
<feature type="binding site" evidence="1">
    <location>
        <position position="150"/>
    </location>
    <ligand>
        <name>[4Fe-4S] cluster</name>
        <dbReference type="ChEBI" id="CHEBI:49883"/>
        <label>2</label>
        <note>4Fe-4S-S-AdoMet</note>
    </ligand>
</feature>
<feature type="binding site" evidence="1">
    <location>
        <position position="154"/>
    </location>
    <ligand>
        <name>[4Fe-4S] cluster</name>
        <dbReference type="ChEBI" id="CHEBI:49883"/>
        <label>2</label>
        <note>4Fe-4S-S-AdoMet</note>
    </ligand>
</feature>
<feature type="binding site" evidence="1">
    <location>
        <position position="157"/>
    </location>
    <ligand>
        <name>[4Fe-4S] cluster</name>
        <dbReference type="ChEBI" id="CHEBI:49883"/>
        <label>2</label>
        <note>4Fe-4S-S-AdoMet</note>
    </ligand>
</feature>
<accession>B4TCV0</accession>
<protein>
    <recommendedName>
        <fullName evidence="1">Ribosomal protein uS12 methylthiotransferase RimO</fullName>
        <shortName evidence="1">uS12 MTTase</shortName>
        <shortName evidence="1">uS12 methylthiotransferase</shortName>
        <ecNumber evidence="1">2.8.4.4</ecNumber>
    </recommendedName>
    <alternativeName>
        <fullName evidence="1">Ribosomal protein uS12 (aspartate-C(3))-methylthiotransferase</fullName>
    </alternativeName>
    <alternativeName>
        <fullName evidence="1">Ribosome maturation factor RimO</fullName>
    </alternativeName>
</protein>
<name>RIMO_SALHS</name>
<gene>
    <name evidence="1" type="primary">rimO</name>
    <name type="ordered locus">SeHA_C0982</name>
</gene>
<dbReference type="EC" id="2.8.4.4" evidence="1"/>
<dbReference type="EMBL" id="CP001120">
    <property type="protein sequence ID" value="ACF66738.1"/>
    <property type="molecule type" value="Genomic_DNA"/>
</dbReference>
<dbReference type="RefSeq" id="WP_000073313.1">
    <property type="nucleotide sequence ID" value="NC_011083.1"/>
</dbReference>
<dbReference type="SMR" id="B4TCV0"/>
<dbReference type="KEGG" id="seh:SeHA_C0982"/>
<dbReference type="HOGENOM" id="CLU_018697_0_0_6"/>
<dbReference type="Proteomes" id="UP000001866">
    <property type="component" value="Chromosome"/>
</dbReference>
<dbReference type="GO" id="GO:0005829">
    <property type="term" value="C:cytosol"/>
    <property type="evidence" value="ECO:0007669"/>
    <property type="project" value="TreeGrafter"/>
</dbReference>
<dbReference type="GO" id="GO:0051539">
    <property type="term" value="F:4 iron, 4 sulfur cluster binding"/>
    <property type="evidence" value="ECO:0007669"/>
    <property type="project" value="UniProtKB-UniRule"/>
</dbReference>
<dbReference type="GO" id="GO:0035599">
    <property type="term" value="F:aspartic acid methylthiotransferase activity"/>
    <property type="evidence" value="ECO:0007669"/>
    <property type="project" value="TreeGrafter"/>
</dbReference>
<dbReference type="GO" id="GO:0046872">
    <property type="term" value="F:metal ion binding"/>
    <property type="evidence" value="ECO:0007669"/>
    <property type="project" value="UniProtKB-KW"/>
</dbReference>
<dbReference type="GO" id="GO:0103039">
    <property type="term" value="F:protein methylthiotransferase activity"/>
    <property type="evidence" value="ECO:0007669"/>
    <property type="project" value="UniProtKB-EC"/>
</dbReference>
<dbReference type="GO" id="GO:0006400">
    <property type="term" value="P:tRNA modification"/>
    <property type="evidence" value="ECO:0007669"/>
    <property type="project" value="InterPro"/>
</dbReference>
<dbReference type="CDD" id="cd01335">
    <property type="entry name" value="Radical_SAM"/>
    <property type="match status" value="1"/>
</dbReference>
<dbReference type="FunFam" id="2.40.50.140:FF:000060">
    <property type="entry name" value="Ribosomal protein S12 methylthiotransferase RimO"/>
    <property type="match status" value="1"/>
</dbReference>
<dbReference type="FunFam" id="3.40.50.12160:FF:000002">
    <property type="entry name" value="Ribosomal protein S12 methylthiotransferase RimO"/>
    <property type="match status" value="1"/>
</dbReference>
<dbReference type="FunFam" id="3.80.30.20:FF:000001">
    <property type="entry name" value="tRNA-2-methylthio-N(6)-dimethylallyladenosine synthase 2"/>
    <property type="match status" value="1"/>
</dbReference>
<dbReference type="Gene3D" id="3.40.50.12160">
    <property type="entry name" value="Methylthiotransferase, N-terminal domain"/>
    <property type="match status" value="1"/>
</dbReference>
<dbReference type="Gene3D" id="2.40.50.140">
    <property type="entry name" value="Nucleic acid-binding proteins"/>
    <property type="match status" value="1"/>
</dbReference>
<dbReference type="Gene3D" id="3.80.30.20">
    <property type="entry name" value="tm_1862 like domain"/>
    <property type="match status" value="1"/>
</dbReference>
<dbReference type="HAMAP" id="MF_01865">
    <property type="entry name" value="MTTase_RimO"/>
    <property type="match status" value="1"/>
</dbReference>
<dbReference type="InterPro" id="IPR006638">
    <property type="entry name" value="Elp3/MiaA/NifB-like_rSAM"/>
</dbReference>
<dbReference type="InterPro" id="IPR005839">
    <property type="entry name" value="Methylthiotransferase"/>
</dbReference>
<dbReference type="InterPro" id="IPR020612">
    <property type="entry name" value="Methylthiotransferase_CS"/>
</dbReference>
<dbReference type="InterPro" id="IPR013848">
    <property type="entry name" value="Methylthiotransferase_N"/>
</dbReference>
<dbReference type="InterPro" id="IPR038135">
    <property type="entry name" value="Methylthiotransferase_N_sf"/>
</dbReference>
<dbReference type="InterPro" id="IPR012340">
    <property type="entry name" value="NA-bd_OB-fold"/>
</dbReference>
<dbReference type="InterPro" id="IPR005840">
    <property type="entry name" value="Ribosomal_uS12_MeSTrfase_RimO"/>
</dbReference>
<dbReference type="InterPro" id="IPR007197">
    <property type="entry name" value="rSAM"/>
</dbReference>
<dbReference type="InterPro" id="IPR023404">
    <property type="entry name" value="rSAM_horseshoe"/>
</dbReference>
<dbReference type="InterPro" id="IPR002792">
    <property type="entry name" value="TRAM_dom"/>
</dbReference>
<dbReference type="NCBIfam" id="TIGR01125">
    <property type="entry name" value="30S ribosomal protein S12 methylthiotransferase RimO"/>
    <property type="match status" value="1"/>
</dbReference>
<dbReference type="NCBIfam" id="TIGR00089">
    <property type="entry name" value="MiaB/RimO family radical SAM methylthiotransferase"/>
    <property type="match status" value="1"/>
</dbReference>
<dbReference type="PANTHER" id="PTHR43837">
    <property type="entry name" value="RIBOSOMAL PROTEIN S12 METHYLTHIOTRANSFERASE RIMO"/>
    <property type="match status" value="1"/>
</dbReference>
<dbReference type="PANTHER" id="PTHR43837:SF1">
    <property type="entry name" value="RIBOSOMAL PROTEIN US12 METHYLTHIOTRANSFERASE RIMO"/>
    <property type="match status" value="1"/>
</dbReference>
<dbReference type="Pfam" id="PF04055">
    <property type="entry name" value="Radical_SAM"/>
    <property type="match status" value="1"/>
</dbReference>
<dbReference type="Pfam" id="PF18693">
    <property type="entry name" value="TRAM_2"/>
    <property type="match status" value="1"/>
</dbReference>
<dbReference type="Pfam" id="PF00919">
    <property type="entry name" value="UPF0004"/>
    <property type="match status" value="1"/>
</dbReference>
<dbReference type="SFLD" id="SFLDG01082">
    <property type="entry name" value="B12-binding_domain_containing"/>
    <property type="match status" value="1"/>
</dbReference>
<dbReference type="SFLD" id="SFLDS00029">
    <property type="entry name" value="Radical_SAM"/>
    <property type="match status" value="1"/>
</dbReference>
<dbReference type="SFLD" id="SFLDF00274">
    <property type="entry name" value="ribosomal_protein_S12_methylth"/>
    <property type="match status" value="1"/>
</dbReference>
<dbReference type="SMART" id="SM00729">
    <property type="entry name" value="Elp3"/>
    <property type="match status" value="1"/>
</dbReference>
<dbReference type="SUPFAM" id="SSF102114">
    <property type="entry name" value="Radical SAM enzymes"/>
    <property type="match status" value="1"/>
</dbReference>
<dbReference type="PROSITE" id="PS51449">
    <property type="entry name" value="MTTASE_N"/>
    <property type="match status" value="1"/>
</dbReference>
<dbReference type="PROSITE" id="PS01278">
    <property type="entry name" value="MTTASE_RADICAL"/>
    <property type="match status" value="1"/>
</dbReference>
<dbReference type="PROSITE" id="PS51918">
    <property type="entry name" value="RADICAL_SAM"/>
    <property type="match status" value="1"/>
</dbReference>
<dbReference type="PROSITE" id="PS50926">
    <property type="entry name" value="TRAM"/>
    <property type="match status" value="1"/>
</dbReference>